<organism>
    <name type="scientific">Oryctolagus cuniculus</name>
    <name type="common">Rabbit</name>
    <dbReference type="NCBI Taxonomy" id="9986"/>
    <lineage>
        <taxon>Eukaryota</taxon>
        <taxon>Metazoa</taxon>
        <taxon>Chordata</taxon>
        <taxon>Craniata</taxon>
        <taxon>Vertebrata</taxon>
        <taxon>Euteleostomi</taxon>
        <taxon>Mammalia</taxon>
        <taxon>Eutheria</taxon>
        <taxon>Euarchontoglires</taxon>
        <taxon>Glires</taxon>
        <taxon>Lagomorpha</taxon>
        <taxon>Leporidae</taxon>
        <taxon>Oryctolagus</taxon>
    </lineage>
</organism>
<protein>
    <recommendedName>
        <fullName>Pulmonary surfactant-associated protein A</fullName>
        <shortName>PSAP</shortName>
        <shortName>PSP-A</shortName>
        <shortName>SP-A</shortName>
    </recommendedName>
</protein>
<accession>P12842</accession>
<reference key="1">
    <citation type="journal article" date="1988" name="J. Biol. Chem.">
        <title>The major apoprotein of rabbit pulmonary surfactant. Elucidation of primary sequence and cyclic AMP and developmental regulation.</title>
        <authorList>
            <person name="Boggaram V."/>
            <person name="Qing K."/>
            <person name="Mendelson C.R."/>
        </authorList>
    </citation>
    <scope>NUCLEOTIDE SEQUENCE [MRNA]</scope>
</reference>
<reference key="2">
    <citation type="journal article" date="1992" name="Am. J. Physiol.">
        <title>Rabbit lung surfactant protein A gene: identification of a lung-specific DNase I hypersensitive site.</title>
        <authorList>
            <person name="Chen Q."/>
            <person name="Boggaram V."/>
            <person name="Mendelson C.R."/>
        </authorList>
    </citation>
    <scope>NUCLEOTIDE SEQUENCE [GENOMIC DNA]</scope>
    <source>
        <strain>New Zealand white</strain>
        <tissue>Liver</tissue>
    </source>
</reference>
<gene>
    <name type="primary">SFTPA1</name>
    <name type="synonym">SFTP1</name>
    <name type="synonym">SFTPA</name>
</gene>
<proteinExistence type="evidence at transcript level"/>
<dbReference type="EMBL" id="J03542">
    <property type="protein sequence ID" value="AAA31465.1"/>
    <property type="molecule type" value="mRNA"/>
</dbReference>
<dbReference type="EMBL" id="L19387">
    <property type="protein sequence ID" value="AAA31468.1"/>
    <property type="molecule type" value="Genomic_DNA"/>
</dbReference>
<dbReference type="PIR" id="A29931">
    <property type="entry name" value="LNRBPS"/>
</dbReference>
<dbReference type="RefSeq" id="NP_001075698.1">
    <property type="nucleotide sequence ID" value="NM_001082229.1"/>
</dbReference>
<dbReference type="RefSeq" id="XP_017206012.1">
    <property type="nucleotide sequence ID" value="XM_017350523.1"/>
</dbReference>
<dbReference type="RefSeq" id="XP_017206013.1">
    <property type="nucleotide sequence ID" value="XM_017350524.1"/>
</dbReference>
<dbReference type="SMR" id="P12842"/>
<dbReference type="FunCoup" id="P12842">
    <property type="interactions" value="29"/>
</dbReference>
<dbReference type="STRING" id="9986.ENSOCUP00000033716"/>
<dbReference type="GlyCosmos" id="P12842">
    <property type="glycosylation" value="1 site, No reported glycans"/>
</dbReference>
<dbReference type="PaxDb" id="9986-ENSOCUP00000012830"/>
<dbReference type="GeneID" id="100009044"/>
<dbReference type="KEGG" id="ocu:100009044"/>
<dbReference type="CTD" id="653509"/>
<dbReference type="eggNOG" id="KOG4297">
    <property type="taxonomic scope" value="Eukaryota"/>
</dbReference>
<dbReference type="InParanoid" id="P12842"/>
<dbReference type="OrthoDB" id="7357196at2759"/>
<dbReference type="TreeFam" id="TF330481"/>
<dbReference type="Proteomes" id="UP000001811">
    <property type="component" value="Unplaced"/>
</dbReference>
<dbReference type="GO" id="GO:0005581">
    <property type="term" value="C:collagen trimer"/>
    <property type="evidence" value="ECO:0007669"/>
    <property type="project" value="UniProtKB-KW"/>
</dbReference>
<dbReference type="GO" id="GO:0005615">
    <property type="term" value="C:extracellular space"/>
    <property type="evidence" value="ECO:0007669"/>
    <property type="project" value="TreeGrafter"/>
</dbReference>
<dbReference type="GO" id="GO:0005771">
    <property type="term" value="C:multivesicular body"/>
    <property type="evidence" value="ECO:0007669"/>
    <property type="project" value="TreeGrafter"/>
</dbReference>
<dbReference type="GO" id="GO:0030246">
    <property type="term" value="F:carbohydrate binding"/>
    <property type="evidence" value="ECO:0007669"/>
    <property type="project" value="UniProtKB-KW"/>
</dbReference>
<dbReference type="GO" id="GO:0046872">
    <property type="term" value="F:metal ion binding"/>
    <property type="evidence" value="ECO:0007669"/>
    <property type="project" value="UniProtKB-KW"/>
</dbReference>
<dbReference type="GO" id="GO:0007585">
    <property type="term" value="P:respiratory gaseous exchange by respiratory system"/>
    <property type="evidence" value="ECO:0007669"/>
    <property type="project" value="UniProtKB-KW"/>
</dbReference>
<dbReference type="CDD" id="cd03591">
    <property type="entry name" value="CLECT_collectin_like"/>
    <property type="match status" value="1"/>
</dbReference>
<dbReference type="FunFam" id="3.10.100.10:FF:000056">
    <property type="entry name" value="Pulmonary surfactant-associated protein A"/>
    <property type="match status" value="1"/>
</dbReference>
<dbReference type="Gene3D" id="3.10.100.10">
    <property type="entry name" value="Mannose-Binding Protein A, subunit A"/>
    <property type="match status" value="1"/>
</dbReference>
<dbReference type="InterPro" id="IPR001304">
    <property type="entry name" value="C-type_lectin-like"/>
</dbReference>
<dbReference type="InterPro" id="IPR016186">
    <property type="entry name" value="C-type_lectin-like/link_sf"/>
</dbReference>
<dbReference type="InterPro" id="IPR018378">
    <property type="entry name" value="C-type_lectin_CS"/>
</dbReference>
<dbReference type="InterPro" id="IPR051077">
    <property type="entry name" value="Ca-dependent_lectin"/>
</dbReference>
<dbReference type="InterPro" id="IPR033990">
    <property type="entry name" value="Collectin_CTLD"/>
</dbReference>
<dbReference type="InterPro" id="IPR016187">
    <property type="entry name" value="CTDL_fold"/>
</dbReference>
<dbReference type="PANTHER" id="PTHR24024">
    <property type="entry name" value="PULMONARY SURFACTANT-ASSOCIATED PROTEIN A"/>
    <property type="match status" value="1"/>
</dbReference>
<dbReference type="PANTHER" id="PTHR24024:SF13">
    <property type="entry name" value="PULMONARY SURFACTANT-ASSOCIATED PROTEIN A1"/>
    <property type="match status" value="1"/>
</dbReference>
<dbReference type="Pfam" id="PF00059">
    <property type="entry name" value="Lectin_C"/>
    <property type="match status" value="1"/>
</dbReference>
<dbReference type="SMART" id="SM00034">
    <property type="entry name" value="CLECT"/>
    <property type="match status" value="1"/>
</dbReference>
<dbReference type="SUPFAM" id="SSF56436">
    <property type="entry name" value="C-type lectin-like"/>
    <property type="match status" value="1"/>
</dbReference>
<dbReference type="SUPFAM" id="SSF57944">
    <property type="entry name" value="Triple coiled coil domain of C-type lectins"/>
    <property type="match status" value="1"/>
</dbReference>
<dbReference type="PROSITE" id="PS00615">
    <property type="entry name" value="C_TYPE_LECTIN_1"/>
    <property type="match status" value="1"/>
</dbReference>
<dbReference type="PROSITE" id="PS50041">
    <property type="entry name" value="C_TYPE_LECTIN_2"/>
    <property type="match status" value="1"/>
</dbReference>
<comment type="function">
    <text evidence="2">In presence of calcium ions, it binds to surfactant phospholipids and contributes to lower the surface tension at the air-liquid interface in the alveoli of the mammalian lung and is essential for normal respiration. Enhances the expression of MYO18A/SP-R210 on alveolar macrophages.</text>
</comment>
<comment type="subunit">
    <text evidence="3">Oligomeric complex of 6 set of homotrimers.</text>
</comment>
<comment type="subcellular location">
    <subcellularLocation>
        <location evidence="3">Secreted</location>
    </subcellularLocation>
    <subcellularLocation>
        <location evidence="3">Secreted</location>
        <location evidence="3">Extracellular space</location>
        <location evidence="3">Extracellular matrix</location>
    </subcellularLocation>
    <subcellularLocation>
        <location evidence="3">Secreted</location>
        <location evidence="3">Extracellular space</location>
        <location evidence="3">Surface film</location>
    </subcellularLocation>
</comment>
<comment type="miscellaneous">
    <text>Pulmonary surfactant consists of 90% lipid and 10% protein. There are 4 surfactant-associated proteins: 2 collagenous, carbohydrate-binding glycoproteins (SP-A and SP-D) and 2 small hydrophobic proteins (SP-B and SP-C).</text>
</comment>
<comment type="similarity">
    <text evidence="7">Belongs to the SFTPA family.</text>
</comment>
<keyword id="KW-0106">Calcium</keyword>
<keyword id="KW-0176">Collagen</keyword>
<keyword id="KW-1015">Disulfide bond</keyword>
<keyword id="KW-0272">Extracellular matrix</keyword>
<keyword id="KW-0305">Gaseous exchange</keyword>
<keyword id="KW-0325">Glycoprotein</keyword>
<keyword id="KW-0379">Hydroxylation</keyword>
<keyword id="KW-0430">Lectin</keyword>
<keyword id="KW-0479">Metal-binding</keyword>
<keyword id="KW-1185">Reference proteome</keyword>
<keyword id="KW-0677">Repeat</keyword>
<keyword id="KW-0964">Secreted</keyword>
<keyword id="KW-0732">Signal</keyword>
<keyword id="KW-0767">Surface film</keyword>
<sequence length="247" mass="26071">MLLLSLALTLISAPASDTCDTKDVCIGSPGIPGTPGSHGLPGRDGRDGVKGDPGPPGPMGPPGGMPGLPGRDGLIGAPGVPGERGDKGEPGERGPPGLPAYLDEELQATLHELRHHALQSIGVLSLQGSMKAVGEKIFSTNGQSVNFDAIREVCARAGGRIAVPRSLEENEAIASIVKERNTYAYLGLAEGPTAGDFYYLDGDPVNYTNWYPGEPRGQGREKCVEMYTDGKWNDKNCLQYRLVICEF</sequence>
<name>SFTPA_RABIT</name>
<evidence type="ECO:0000250" key="1"/>
<evidence type="ECO:0000250" key="2">
    <source>
        <dbReference type="UniProtKB" id="P35242"/>
    </source>
</evidence>
<evidence type="ECO:0000250" key="3">
    <source>
        <dbReference type="UniProtKB" id="Q8IWL2"/>
    </source>
</evidence>
<evidence type="ECO:0000255" key="4"/>
<evidence type="ECO:0000255" key="5">
    <source>
        <dbReference type="PROSITE-ProRule" id="PRU00040"/>
    </source>
</evidence>
<evidence type="ECO:0000256" key="6">
    <source>
        <dbReference type="SAM" id="MobiDB-lite"/>
    </source>
</evidence>
<evidence type="ECO:0000305" key="7"/>
<feature type="signal peptide" evidence="4">
    <location>
        <begin position="1"/>
        <end position="15"/>
    </location>
</feature>
<feature type="chain" id="PRO_0000017461" description="Pulmonary surfactant-associated protein A">
    <location>
        <begin position="16"/>
        <end position="247"/>
    </location>
</feature>
<feature type="domain" description="Collagen-like">
    <location>
        <begin position="27"/>
        <end position="99"/>
    </location>
</feature>
<feature type="domain" description="C-type lectin" evidence="5">
    <location>
        <begin position="132"/>
        <end position="247"/>
    </location>
</feature>
<feature type="region of interest" description="Disordered" evidence="6">
    <location>
        <begin position="30"/>
        <end position="100"/>
    </location>
</feature>
<feature type="compositionally biased region" description="Basic and acidic residues" evidence="6">
    <location>
        <begin position="41"/>
        <end position="50"/>
    </location>
</feature>
<feature type="compositionally biased region" description="Pro residues" evidence="6">
    <location>
        <begin position="53"/>
        <end position="64"/>
    </location>
</feature>
<feature type="compositionally biased region" description="Basic and acidic residues" evidence="6">
    <location>
        <begin position="83"/>
        <end position="92"/>
    </location>
</feature>
<feature type="binding site" evidence="1">
    <location>
        <position position="214"/>
    </location>
    <ligand>
        <name>Ca(2+)</name>
        <dbReference type="ChEBI" id="CHEBI:29108"/>
    </ligand>
</feature>
<feature type="binding site" evidence="1">
    <location>
        <position position="216"/>
    </location>
    <ligand>
        <name>Ca(2+)</name>
        <dbReference type="ChEBI" id="CHEBI:29108"/>
    </ligand>
</feature>
<feature type="binding site" evidence="1">
    <location>
        <position position="233"/>
    </location>
    <ligand>
        <name>Ca(2+)</name>
        <dbReference type="ChEBI" id="CHEBI:29108"/>
    </ligand>
</feature>
<feature type="binding site" evidence="1">
    <location>
        <position position="234"/>
    </location>
    <ligand>
        <name>Ca(2+)</name>
        <dbReference type="ChEBI" id="CHEBI:29108"/>
    </ligand>
</feature>
<feature type="modified residue" description="4-hydroxyproline" evidence="1">
    <location>
        <position position="29"/>
    </location>
</feature>
<feature type="modified residue" description="4-hydroxyproline" evidence="1">
    <location>
        <position position="32"/>
    </location>
</feature>
<feature type="modified residue" description="4-hydroxyproline" evidence="1">
    <location>
        <position position="35"/>
    </location>
</feature>
<feature type="modified residue" description="4-hydroxyproline" evidence="1">
    <location>
        <position position="41"/>
    </location>
</feature>
<feature type="modified residue" description="4-hydroxyproline" evidence="1">
    <location>
        <position position="53"/>
    </location>
</feature>
<feature type="modified residue" description="4-hydroxyproline" evidence="1">
    <location>
        <position position="56"/>
    </location>
</feature>
<feature type="modified residue" description="4-hydroxyproline" evidence="1">
    <location>
        <position position="62"/>
    </location>
</feature>
<feature type="modified residue" description="4-hydroxyproline" evidence="1">
    <location>
        <position position="66"/>
    </location>
</feature>
<feature type="modified residue" description="4-hydroxyproline" evidence="1">
    <location>
        <position position="69"/>
    </location>
</feature>
<feature type="glycosylation site" description="N-linked (GlcNAc...) asparagine" evidence="7">
    <location>
        <position position="206"/>
    </location>
</feature>
<feature type="disulfide bond" description="Interchain" evidence="5">
    <location>
        <position position="25"/>
    </location>
</feature>
<feature type="disulfide bond" evidence="5">
    <location>
        <begin position="154"/>
        <end position="245"/>
    </location>
</feature>
<feature type="disulfide bond" evidence="5">
    <location>
        <begin position="223"/>
        <end position="237"/>
    </location>
</feature>
<feature type="sequence variant">
    <original>S</original>
    <variation>P</variation>
    <location>
        <position position="12"/>
    </location>
</feature>
<feature type="sequence conflict" description="In Ref. 2; AAA31468." evidence="7" ref="2">
    <original>GPMG</original>
    <variation>APWA</variation>
    <location>
        <begin position="57"/>
        <end position="60"/>
    </location>
</feature>